<reference key="1">
    <citation type="submission" date="1998-02" db="EMBL/GenBank/DDBJ databases">
        <authorList>
            <person name="Carbonero P."/>
        </authorList>
    </citation>
    <scope>NUCLEOTIDE SEQUENCE [MRNA]</scope>
    <source>
        <strain>cv. Chinese Spring</strain>
        <tissue>Endosperm</tissue>
    </source>
</reference>
<reference key="2">
    <citation type="journal article" date="1981" name="Phytochemistry">
        <title>The complete amino acid sequence of a major wheat protein inhibitor of alpha-amylase.</title>
        <authorList>
            <person name="Kashlan N."/>
            <person name="Richardson M."/>
        </authorList>
    </citation>
    <scope>PROTEIN SEQUENCE OF 31-153</scope>
</reference>
<reference key="3">
    <citation type="journal article" date="1991" name="Eur. J. Biochem.">
        <title>Assignment of the five disulfide bridges in an alpha-amylase inhibitor from wheat kernel by fast-atom-bombardment mass spectrometry and Edman degradation.</title>
        <authorList>
            <person name="Poerio E."/>
            <person name="Caporale C."/>
            <person name="Carrano L."/>
            <person name="Pucci P."/>
            <person name="Buonocore V."/>
        </authorList>
    </citation>
    <scope>PROTEIN SEQUENCE OF 31-153</scope>
    <scope>DISULFIDE BONDS</scope>
    <source>
        <strain>cv. Pastore</strain>
    </source>
</reference>
<reference key="4">
    <citation type="journal article" date="1991" name="Protein Seq. Data Anal.">
        <title>Determination of the primary structure of an alpha-amylase inhibitor from wheat kernel by Edman degradation and fast atom bombardment mass spectrometry.</title>
        <authorList>
            <person name="Caporale C."/>
            <person name="Carrano L."/>
            <person name="Nitti G."/>
            <person name="Poerio E."/>
            <person name="Pucci P."/>
            <person name="Buonocore V."/>
        </authorList>
    </citation>
    <scope>PROTEIN SEQUENCE OF 31-153</scope>
</reference>
<reference key="5">
    <citation type="journal article" date="1976" name="Biochem. J.">
        <title>N-terminal amino acid sequence of wheat proteins that lack phenylalanine and histidine residues.</title>
        <authorList>
            <person name="Redman D.G."/>
        </authorList>
    </citation>
    <scope>PROTEIN SEQUENCE OF 31-54</scope>
</reference>
<reference key="6">
    <citation type="journal article" date="1991" name="Plant Mol. Biol.">
        <title>Site-directed mutagenesis and expression in Escherichia coli of WMAI-1, a wheat monomeric inhibitor of insect alpha-amylase.</title>
        <authorList>
            <person name="Garcia-Maroto F."/>
            <person name="Carbonero P."/>
            <person name="Garcia-Olmedo F."/>
        </authorList>
    </citation>
    <scope>MUTAGENESIS OF SER-31; TRP-34; GLY-61; GLU-66; ASP-88 AND 99-GLU-LEU-100</scope>
</reference>
<accession>P01083</accession>
<accession>O49956</accession>
<accession>Q99300</accession>
<feature type="signal peptide" evidence="1 2 4 5">
    <location>
        <begin position="1"/>
        <end position="30"/>
    </location>
</feature>
<feature type="chain" id="PRO_0000070485" description="Alpha-amylase inhibitor 0.28">
    <location>
        <begin position="31"/>
        <end position="153"/>
    </location>
</feature>
<feature type="disulfide bond" evidence="2">
    <location>
        <begin position="37"/>
        <end position="84"/>
    </location>
</feature>
<feature type="disulfide bond" evidence="2">
    <location>
        <begin position="51"/>
        <end position="72"/>
    </location>
</feature>
<feature type="disulfide bond" evidence="2">
    <location>
        <begin position="59"/>
        <end position="112"/>
    </location>
</feature>
<feature type="disulfide bond" evidence="2">
    <location>
        <begin position="73"/>
        <end position="128"/>
    </location>
</feature>
<feature type="disulfide bond" evidence="2">
    <location>
        <begin position="86"/>
        <end position="143"/>
    </location>
</feature>
<feature type="sequence variant" description="In 50% of the molecules.">
    <original>S</original>
    <variation>A</variation>
    <location>
        <position position="95"/>
    </location>
</feature>
<feature type="sequence variant" description="In very small amount.">
    <original>Y</original>
    <variation>A</variation>
    <location>
        <position position="97"/>
    </location>
</feature>
<feature type="sequence variant" description="In very small amount.">
    <original>CK</original>
    <variation>GP</variation>
    <location>
        <begin position="128"/>
        <end position="129"/>
    </location>
</feature>
<feature type="mutagenesis site" description="Increases preincubation time required for maximum activity." evidence="3">
    <original>S</original>
    <variation>ARIRAR</variation>
    <location>
        <position position="31"/>
    </location>
</feature>
<feature type="mutagenesis site" description="Abolishes activity." evidence="3">
    <original>W</original>
    <variation>WEPRAPW</variation>
    <location>
        <position position="34"/>
    </location>
</feature>
<feature type="mutagenesis site" description="Increases preincubation time required for maximum activity." evidence="3">
    <original>W</original>
    <variation>WGPRLPW</variation>
    <location>
        <position position="34"/>
    </location>
</feature>
<feature type="mutagenesis site" description="Little effect on activity." evidence="3">
    <original>G</original>
    <variation>GIGPRL</variation>
    <variation>GIGPPL</variation>
    <variation>GIGPLL</variation>
    <location>
        <position position="61"/>
    </location>
</feature>
<feature type="mutagenesis site" description="Little effect on activity." evidence="3">
    <original>E</original>
    <variation>EGPRLPE</variation>
    <variation>EEPRAPE</variation>
    <location>
        <position position="66"/>
    </location>
</feature>
<feature type="mutagenesis site" description="Abolishes activity." evidence="3">
    <original>D</original>
    <variation>EGPRL</variation>
    <variation>DDGP</variation>
    <variation>DD</variation>
    <location>
        <position position="88"/>
    </location>
</feature>
<feature type="mutagenesis site" description="Little effect on activity." evidence="3">
    <original>EL</original>
    <variation>GASGPSLG</variation>
    <variation>GASGP</variation>
    <location>
        <begin position="99"/>
        <end position="100"/>
    </location>
</feature>
<feature type="sequence conflict" description="In Ref. 1; CAA11410 and 5; AA sequence." evidence="6" ref="1 5">
    <original>N</original>
    <variation>D</variation>
    <location>
        <position position="38"/>
    </location>
</feature>
<feature type="sequence conflict" description="In Ref. 5; AA sequence." evidence="6" ref="5">
    <original>Y</original>
    <variation>W</variation>
    <location>
        <position position="43"/>
    </location>
</feature>
<feature type="sequence conflict" description="In Ref. 1; CAA11410." evidence="6" ref="1">
    <location>
        <begin position="145"/>
        <end position="146"/>
    </location>
</feature>
<feature type="sequence conflict" description="In Ref. 2; AA sequence." evidence="6" ref="2">
    <original>A</original>
    <variation>C</variation>
    <location>
        <position position="148"/>
    </location>
</feature>
<evidence type="ECO:0000269" key="1">
    <source>
    </source>
</evidence>
<evidence type="ECO:0000269" key="2">
    <source>
    </source>
</evidence>
<evidence type="ECO:0000269" key="3">
    <source>
    </source>
</evidence>
<evidence type="ECO:0000269" key="4">
    <source>
    </source>
</evidence>
<evidence type="ECO:0000269" key="5">
    <source ref="2"/>
</evidence>
<evidence type="ECO:0000305" key="6"/>
<gene>
    <name type="primary">IMA1</name>
</gene>
<sequence length="153" mass="16800">MWMKTVFWGLLVFMLVATTMAVEYGARSHNSGPWSWCNPATGYKVSALTGCRAMVKLQCVGSQVPEAVLRDCCQQLADINNEWCRCGDLSSMLRSVYQELGVREGKEVLPGCRKEVMKLTAASVPEVCKVPIPNPSGDRAGVCYGDWAAYPDV</sequence>
<keyword id="KW-0022">Alpha-amylase inhibitor</keyword>
<keyword id="KW-0903">Direct protein sequencing</keyword>
<keyword id="KW-1015">Disulfide bond</keyword>
<keyword id="KW-1185">Reference proteome</keyword>
<keyword id="KW-0964">Secreted</keyword>
<keyword id="KW-0732">Signal</keyword>
<dbReference type="EMBL" id="AJ223492">
    <property type="protein sequence ID" value="CAA11410.1"/>
    <property type="molecule type" value="mRNA"/>
</dbReference>
<dbReference type="PIR" id="A01322">
    <property type="entry name" value="WIWTA"/>
</dbReference>
<dbReference type="PIR" id="S16920">
    <property type="entry name" value="S16920"/>
</dbReference>
<dbReference type="PIR" id="T06517">
    <property type="entry name" value="T06517"/>
</dbReference>
<dbReference type="SMR" id="P01083"/>
<dbReference type="STRING" id="4565.P01083"/>
<dbReference type="Allergome" id="8725">
    <property type="allergen name" value="Tri a 15"/>
</dbReference>
<dbReference type="PaxDb" id="4565-Traes_6DS_1854119F9.1"/>
<dbReference type="Proteomes" id="UP000019116">
    <property type="component" value="Unplaced"/>
</dbReference>
<dbReference type="ExpressionAtlas" id="P01083">
    <property type="expression patterns" value="baseline"/>
</dbReference>
<dbReference type="GO" id="GO:0005576">
    <property type="term" value="C:extracellular region"/>
    <property type="evidence" value="ECO:0007669"/>
    <property type="project" value="UniProtKB-SubCell"/>
</dbReference>
<dbReference type="GO" id="GO:0015066">
    <property type="term" value="F:alpha-amylase inhibitor activity"/>
    <property type="evidence" value="ECO:0000314"/>
    <property type="project" value="UniProtKB"/>
</dbReference>
<dbReference type="GO" id="GO:0004867">
    <property type="term" value="F:serine-type endopeptidase inhibitor activity"/>
    <property type="evidence" value="ECO:0007669"/>
    <property type="project" value="InterPro"/>
</dbReference>
<dbReference type="CDD" id="cd00261">
    <property type="entry name" value="AAI_SS"/>
    <property type="match status" value="1"/>
</dbReference>
<dbReference type="FunFam" id="1.10.110.10:FF:000004">
    <property type="entry name" value="Alpha-amylase inhibitor 0.19"/>
    <property type="match status" value="1"/>
</dbReference>
<dbReference type="Gene3D" id="1.10.110.10">
    <property type="entry name" value="Plant lipid-transfer and hydrophobic proteins"/>
    <property type="match status" value="1"/>
</dbReference>
<dbReference type="InterPro" id="IPR006106">
    <property type="entry name" value="Allergen/soft/tryp_amyl_inhib"/>
</dbReference>
<dbReference type="InterPro" id="IPR006105">
    <property type="entry name" value="Allergen/tryp_amyl_inhib_CS"/>
</dbReference>
<dbReference type="InterPro" id="IPR036312">
    <property type="entry name" value="Bifun_inhib/LTP/seed_sf"/>
</dbReference>
<dbReference type="InterPro" id="IPR016140">
    <property type="entry name" value="Bifunc_inhib/LTP/seed_store"/>
</dbReference>
<dbReference type="PANTHER" id="PTHR34481:SF8">
    <property type="entry name" value="SEED ALLERGENIC PROTEIN RAG1"/>
    <property type="match status" value="1"/>
</dbReference>
<dbReference type="PANTHER" id="PTHR34481">
    <property type="entry name" value="TRYPSIN/FACTOR XIIA INHIBITOR-RELATED"/>
    <property type="match status" value="1"/>
</dbReference>
<dbReference type="Pfam" id="PF00234">
    <property type="entry name" value="Tryp_alpha_amyl"/>
    <property type="match status" value="1"/>
</dbReference>
<dbReference type="PIRSF" id="PIRSF001657">
    <property type="entry name" value="Allergen/amylase_inhib"/>
    <property type="match status" value="1"/>
</dbReference>
<dbReference type="PRINTS" id="PR00808">
    <property type="entry name" value="AMLASEINHBTR"/>
</dbReference>
<dbReference type="SMART" id="SM00499">
    <property type="entry name" value="AAI"/>
    <property type="match status" value="1"/>
</dbReference>
<dbReference type="SUPFAM" id="SSF47699">
    <property type="entry name" value="Bifunctional inhibitor/lipid-transfer protein/seed storage 2S albumin"/>
    <property type="match status" value="1"/>
</dbReference>
<dbReference type="PROSITE" id="PS00426">
    <property type="entry name" value="CEREAL_TRYP_AMYL_INH"/>
    <property type="match status" value="1"/>
</dbReference>
<organism>
    <name type="scientific">Triticum aestivum</name>
    <name type="common">Wheat</name>
    <dbReference type="NCBI Taxonomy" id="4565"/>
    <lineage>
        <taxon>Eukaryota</taxon>
        <taxon>Viridiplantae</taxon>
        <taxon>Streptophyta</taxon>
        <taxon>Embryophyta</taxon>
        <taxon>Tracheophyta</taxon>
        <taxon>Spermatophyta</taxon>
        <taxon>Magnoliopsida</taxon>
        <taxon>Liliopsida</taxon>
        <taxon>Poales</taxon>
        <taxon>Poaceae</taxon>
        <taxon>BOP clade</taxon>
        <taxon>Pooideae</taxon>
        <taxon>Triticodae</taxon>
        <taxon>Triticeae</taxon>
        <taxon>Triticinae</taxon>
        <taxon>Triticum</taxon>
    </lineage>
</organism>
<proteinExistence type="evidence at protein level"/>
<name>IAA2_WHEAT</name>
<comment type="function">
    <text>Alpha-amylase inhibitor.</text>
</comment>
<comment type="subunit">
    <text>Monomer.</text>
</comment>
<comment type="subcellular location">
    <subcellularLocation>
        <location>Secreted</location>
    </subcellularLocation>
</comment>
<comment type="tissue specificity">
    <text>Endosperm.</text>
</comment>
<comment type="PTM">
    <text>The disulfide bonds are essential for the inhibitor activity.</text>
</comment>
<comment type="similarity">
    <text evidence="6">Belongs to the protease inhibitor I6 (cereal trypsin/alpha-amylase inhibitor) family.</text>
</comment>
<protein>
    <recommendedName>
        <fullName>Alpha-amylase inhibitor 0.28</fullName>
    </recommendedName>
    <alternativeName>
        <fullName>CIII</fullName>
    </alternativeName>
    <alternativeName>
        <fullName>WMAI-1</fullName>
    </alternativeName>
</protein>